<proteinExistence type="inferred from homology"/>
<protein>
    <recommendedName>
        <fullName evidence="1">Phosphoglycerate kinase</fullName>
        <ecNumber evidence="1">2.7.2.3</ecNumber>
    </recommendedName>
</protein>
<evidence type="ECO:0000255" key="1">
    <source>
        <dbReference type="HAMAP-Rule" id="MF_00145"/>
    </source>
</evidence>
<dbReference type="EC" id="2.7.2.3" evidence="1"/>
<dbReference type="EMBL" id="CU458896">
    <property type="protein sequence ID" value="CAM62857.1"/>
    <property type="molecule type" value="Genomic_DNA"/>
</dbReference>
<dbReference type="RefSeq" id="WP_005082297.1">
    <property type="nucleotide sequence ID" value="NZ_MLCG01000003.1"/>
</dbReference>
<dbReference type="SMR" id="B1MC86"/>
<dbReference type="GeneID" id="93379709"/>
<dbReference type="KEGG" id="mab:MAB_2778c"/>
<dbReference type="UniPathway" id="UPA00109">
    <property type="reaction ID" value="UER00185"/>
</dbReference>
<dbReference type="Proteomes" id="UP000007137">
    <property type="component" value="Chromosome"/>
</dbReference>
<dbReference type="GO" id="GO:0005829">
    <property type="term" value="C:cytosol"/>
    <property type="evidence" value="ECO:0007669"/>
    <property type="project" value="TreeGrafter"/>
</dbReference>
<dbReference type="GO" id="GO:0043531">
    <property type="term" value="F:ADP binding"/>
    <property type="evidence" value="ECO:0007669"/>
    <property type="project" value="TreeGrafter"/>
</dbReference>
<dbReference type="GO" id="GO:0005524">
    <property type="term" value="F:ATP binding"/>
    <property type="evidence" value="ECO:0007669"/>
    <property type="project" value="UniProtKB-KW"/>
</dbReference>
<dbReference type="GO" id="GO:0004618">
    <property type="term" value="F:phosphoglycerate kinase activity"/>
    <property type="evidence" value="ECO:0007669"/>
    <property type="project" value="UniProtKB-UniRule"/>
</dbReference>
<dbReference type="GO" id="GO:0006094">
    <property type="term" value="P:gluconeogenesis"/>
    <property type="evidence" value="ECO:0007669"/>
    <property type="project" value="TreeGrafter"/>
</dbReference>
<dbReference type="GO" id="GO:0006096">
    <property type="term" value="P:glycolytic process"/>
    <property type="evidence" value="ECO:0007669"/>
    <property type="project" value="UniProtKB-UniRule"/>
</dbReference>
<dbReference type="CDD" id="cd00318">
    <property type="entry name" value="Phosphoglycerate_kinase"/>
    <property type="match status" value="1"/>
</dbReference>
<dbReference type="FunFam" id="3.40.50.1260:FF:000006">
    <property type="entry name" value="Phosphoglycerate kinase"/>
    <property type="match status" value="1"/>
</dbReference>
<dbReference type="FunFam" id="3.40.50.1260:FF:000031">
    <property type="entry name" value="Phosphoglycerate kinase 1"/>
    <property type="match status" value="1"/>
</dbReference>
<dbReference type="Gene3D" id="3.40.50.1260">
    <property type="entry name" value="Phosphoglycerate kinase, N-terminal domain"/>
    <property type="match status" value="2"/>
</dbReference>
<dbReference type="HAMAP" id="MF_00145">
    <property type="entry name" value="Phosphoglyc_kinase"/>
    <property type="match status" value="1"/>
</dbReference>
<dbReference type="InterPro" id="IPR001576">
    <property type="entry name" value="Phosphoglycerate_kinase"/>
</dbReference>
<dbReference type="InterPro" id="IPR015911">
    <property type="entry name" value="Phosphoglycerate_kinase_CS"/>
</dbReference>
<dbReference type="InterPro" id="IPR015824">
    <property type="entry name" value="Phosphoglycerate_kinase_N"/>
</dbReference>
<dbReference type="InterPro" id="IPR036043">
    <property type="entry name" value="Phosphoglycerate_kinase_sf"/>
</dbReference>
<dbReference type="PANTHER" id="PTHR11406">
    <property type="entry name" value="PHOSPHOGLYCERATE KINASE"/>
    <property type="match status" value="1"/>
</dbReference>
<dbReference type="PANTHER" id="PTHR11406:SF23">
    <property type="entry name" value="PHOSPHOGLYCERATE KINASE 1, CHLOROPLASTIC-RELATED"/>
    <property type="match status" value="1"/>
</dbReference>
<dbReference type="Pfam" id="PF00162">
    <property type="entry name" value="PGK"/>
    <property type="match status" value="1"/>
</dbReference>
<dbReference type="PIRSF" id="PIRSF000724">
    <property type="entry name" value="Pgk"/>
    <property type="match status" value="1"/>
</dbReference>
<dbReference type="PRINTS" id="PR00477">
    <property type="entry name" value="PHGLYCKINASE"/>
</dbReference>
<dbReference type="SUPFAM" id="SSF53748">
    <property type="entry name" value="Phosphoglycerate kinase"/>
    <property type="match status" value="1"/>
</dbReference>
<dbReference type="PROSITE" id="PS00111">
    <property type="entry name" value="PGLYCERATE_KINASE"/>
    <property type="match status" value="1"/>
</dbReference>
<comment type="catalytic activity">
    <reaction evidence="1">
        <text>(2R)-3-phosphoglycerate + ATP = (2R)-3-phospho-glyceroyl phosphate + ADP</text>
        <dbReference type="Rhea" id="RHEA:14801"/>
        <dbReference type="ChEBI" id="CHEBI:30616"/>
        <dbReference type="ChEBI" id="CHEBI:57604"/>
        <dbReference type="ChEBI" id="CHEBI:58272"/>
        <dbReference type="ChEBI" id="CHEBI:456216"/>
        <dbReference type="EC" id="2.7.2.3"/>
    </reaction>
</comment>
<comment type="pathway">
    <text evidence="1">Carbohydrate degradation; glycolysis; pyruvate from D-glyceraldehyde 3-phosphate: step 2/5.</text>
</comment>
<comment type="subunit">
    <text evidence="1">Monomer.</text>
</comment>
<comment type="subcellular location">
    <subcellularLocation>
        <location evidence="1">Cytoplasm</location>
    </subcellularLocation>
</comment>
<comment type="similarity">
    <text evidence="1">Belongs to the phosphoglycerate kinase family.</text>
</comment>
<feature type="chain" id="PRO_1000096357" description="Phosphoglycerate kinase">
    <location>
        <begin position="1"/>
        <end position="412"/>
    </location>
</feature>
<feature type="binding site" evidence="1">
    <location>
        <begin position="24"/>
        <end position="26"/>
    </location>
    <ligand>
        <name>substrate</name>
    </ligand>
</feature>
<feature type="binding site" evidence="1">
    <location>
        <position position="44"/>
    </location>
    <ligand>
        <name>substrate</name>
    </ligand>
</feature>
<feature type="binding site" evidence="1">
    <location>
        <begin position="67"/>
        <end position="70"/>
    </location>
    <ligand>
        <name>substrate</name>
    </ligand>
</feature>
<feature type="binding site" evidence="1">
    <location>
        <position position="126"/>
    </location>
    <ligand>
        <name>substrate</name>
    </ligand>
</feature>
<feature type="binding site" evidence="1">
    <location>
        <position position="170"/>
    </location>
    <ligand>
        <name>substrate</name>
    </ligand>
</feature>
<feature type="binding site" evidence="1">
    <location>
        <position position="220"/>
    </location>
    <ligand>
        <name>ATP</name>
        <dbReference type="ChEBI" id="CHEBI:30616"/>
    </ligand>
</feature>
<feature type="binding site" evidence="1">
    <location>
        <position position="308"/>
    </location>
    <ligand>
        <name>ATP</name>
        <dbReference type="ChEBI" id="CHEBI:30616"/>
    </ligand>
</feature>
<feature type="binding site" evidence="1">
    <location>
        <position position="339"/>
    </location>
    <ligand>
        <name>ATP</name>
        <dbReference type="ChEBI" id="CHEBI:30616"/>
    </ligand>
</feature>
<feature type="binding site" evidence="1">
    <location>
        <begin position="368"/>
        <end position="371"/>
    </location>
    <ligand>
        <name>ATP</name>
        <dbReference type="ChEBI" id="CHEBI:30616"/>
    </ligand>
</feature>
<name>PGK_MYCA9</name>
<sequence length="412" mass="42264">MAIKSLNDLLAEGVSGKGVLVRSDLNVPLEYLDGNIAHISDPGRIVASVPTIRALAGAGAKVIVTAHLGRPDGKPDPKLSLAPVGAALGELLGQHVQVAGDVVGTDALARAEGLTDGDVLLLENIRFDPRETSKDDAQRLALARELAELVGGPTGTGGAFVSDGFGVVHRKQASVYDVATLLPHYAGGLVAAEVEVLRVLTASTERPYAVVLGGSKVSDKLAVIESLATKADSLVIGGGMCFTFLAAQGLPVGKSLVQLEMVDTCKRLLDTYADVIHLPMDIVAADEFAADSPSEIVAADAIPDSKMGLDIGPESVKRFAAVLSNAKTIFWNGPMGVFEFPAFAAGTRGVAEAIIAATEKGAFSVVGGGDSAAAVRALDLPDDGFSHISTGGGASLEYLEGKVLPGIDVLED</sequence>
<keyword id="KW-0067">ATP-binding</keyword>
<keyword id="KW-0963">Cytoplasm</keyword>
<keyword id="KW-0324">Glycolysis</keyword>
<keyword id="KW-0418">Kinase</keyword>
<keyword id="KW-0547">Nucleotide-binding</keyword>
<keyword id="KW-1185">Reference proteome</keyword>
<keyword id="KW-0808">Transferase</keyword>
<accession>B1MC86</accession>
<organism>
    <name type="scientific">Mycobacteroides abscessus (strain ATCC 19977 / DSM 44196 / CCUG 20993 / CIP 104536 / JCM 13569 / NCTC 13031 / TMC 1543 / L948)</name>
    <name type="common">Mycobacterium abscessus</name>
    <dbReference type="NCBI Taxonomy" id="561007"/>
    <lineage>
        <taxon>Bacteria</taxon>
        <taxon>Bacillati</taxon>
        <taxon>Actinomycetota</taxon>
        <taxon>Actinomycetes</taxon>
        <taxon>Mycobacteriales</taxon>
        <taxon>Mycobacteriaceae</taxon>
        <taxon>Mycobacteroides</taxon>
        <taxon>Mycobacteroides abscessus</taxon>
    </lineage>
</organism>
<gene>
    <name evidence="1" type="primary">pgk</name>
    <name type="ordered locus">MAB_2778c</name>
</gene>
<reference key="1">
    <citation type="journal article" date="2009" name="PLoS ONE">
        <title>Non mycobacterial virulence genes in the genome of the emerging pathogen Mycobacterium abscessus.</title>
        <authorList>
            <person name="Ripoll F."/>
            <person name="Pasek S."/>
            <person name="Schenowitz C."/>
            <person name="Dossat C."/>
            <person name="Barbe V."/>
            <person name="Rottman M."/>
            <person name="Macheras E."/>
            <person name="Heym B."/>
            <person name="Herrmann J.L."/>
            <person name="Daffe M."/>
            <person name="Brosch R."/>
            <person name="Risler J.L."/>
            <person name="Gaillard J.L."/>
        </authorList>
    </citation>
    <scope>NUCLEOTIDE SEQUENCE [LARGE SCALE GENOMIC DNA]</scope>
    <source>
        <strain>ATCC 19977 / DSM 44196 / CCUG 20993 / CIP 104536 / JCM 13569 / NCTC 13031 / TMC 1543 / L948</strain>
    </source>
</reference>